<organismHost>
    <name type="scientific">Frankliniella occidentalis</name>
    <name type="common">Western flower thrips</name>
    <name type="synonym">Euthrips occidentalis</name>
    <dbReference type="NCBI Taxonomy" id="133901"/>
</organismHost>
<organismHost>
    <name type="scientific">Scirtothrips dorsalis</name>
    <name type="common">Chilli thrips</name>
    <dbReference type="NCBI Taxonomy" id="163899"/>
</organismHost>
<organismHost>
    <name type="scientific">Solanum lycopersicum</name>
    <name type="common">Tomato</name>
    <name type="synonym">Lycopersicon esculentum</name>
    <dbReference type="NCBI Taxonomy" id="4081"/>
</organismHost>
<organismHost>
    <name type="scientific">Thrips tabaci</name>
    <dbReference type="NCBI Taxonomy" id="161014"/>
</organismHost>
<name>NCAP_TSWVH</name>
<keyword id="KW-0167">Capsid protein</keyword>
<keyword id="KW-1139">Helical capsid protein</keyword>
<keyword id="KW-0687">Ribonucleoprotein</keyword>
<keyword id="KW-0694">RNA-binding</keyword>
<keyword id="KW-0543">Viral nucleoprotein</keyword>
<keyword id="KW-0946">Virion</keyword>
<accession>P26000</accession>
<dbReference type="EMBL" id="X61799">
    <property type="protein sequence ID" value="CAA43904.1"/>
    <property type="molecule type" value="mRNA"/>
</dbReference>
<dbReference type="PIR" id="S17105">
    <property type="entry name" value="S17105"/>
</dbReference>
<dbReference type="SMR" id="P26000"/>
<dbReference type="GO" id="GO:0019029">
    <property type="term" value="C:helical viral capsid"/>
    <property type="evidence" value="ECO:0007669"/>
    <property type="project" value="UniProtKB-KW"/>
</dbReference>
<dbReference type="GO" id="GO:1990904">
    <property type="term" value="C:ribonucleoprotein complex"/>
    <property type="evidence" value="ECO:0007669"/>
    <property type="project" value="UniProtKB-KW"/>
</dbReference>
<dbReference type="GO" id="GO:0019013">
    <property type="term" value="C:viral nucleocapsid"/>
    <property type="evidence" value="ECO:0007669"/>
    <property type="project" value="UniProtKB-KW"/>
</dbReference>
<dbReference type="GO" id="GO:0003723">
    <property type="term" value="F:RNA binding"/>
    <property type="evidence" value="ECO:0007669"/>
    <property type="project" value="UniProtKB-KW"/>
</dbReference>
<dbReference type="InterPro" id="IPR002517">
    <property type="entry name" value="Tospo_nucleocap"/>
</dbReference>
<dbReference type="Pfam" id="PF01533">
    <property type="entry name" value="Tospo_nucleocap"/>
    <property type="match status" value="1"/>
</dbReference>
<dbReference type="PIRSF" id="PIRSF003948">
    <property type="entry name" value="N_TospoV"/>
    <property type="match status" value="1"/>
</dbReference>
<gene>
    <name type="primary">N</name>
</gene>
<protein>
    <recommendedName>
        <fullName>Nucleoprotein</fullName>
    </recommendedName>
    <alternativeName>
        <fullName>Nucleocapsid protein</fullName>
        <shortName>Protein N</shortName>
    </alternativeName>
</protein>
<evidence type="ECO:0000250" key="1">
    <source>
        <dbReference type="UniProtKB" id="P16495"/>
    </source>
</evidence>
<evidence type="ECO:0000305" key="2"/>
<reference key="1">
    <citation type="submission" date="1991-09" db="EMBL/GenBank/DDBJ databases">
        <authorList>
            <person name="Kim J.W."/>
            <person name="Sun S.S.M."/>
            <person name="German T.L."/>
        </authorList>
    </citation>
    <scope>NUCLEOTIDE SEQUENCE [MRNA]</scope>
</reference>
<organism>
    <name type="scientific">Tomato spotted wilt virus (strain Hawaiian)</name>
    <name type="common">TSWV</name>
    <dbReference type="NCBI Taxonomy" id="36416"/>
    <lineage>
        <taxon>Viruses</taxon>
        <taxon>Riboviria</taxon>
        <taxon>Orthornavirae</taxon>
        <taxon>Negarnaviricota</taxon>
        <taxon>Polyploviricotina</taxon>
        <taxon>Ellioviricetes</taxon>
        <taxon>Bunyavirales</taxon>
        <taxon>Tospoviridae</taxon>
        <taxon>Orthotospovirus</taxon>
        <taxon>Tomato spotted wilt virus</taxon>
    </lineage>
</organism>
<feature type="chain" id="PRO_0000222003" description="Nucleoprotein">
    <location>
        <begin position="1"/>
        <end position="258"/>
    </location>
</feature>
<proteinExistence type="evidence at transcript level"/>
<comment type="function">
    <text evidence="1">Encapsidates the genome protecting it from nucleases. The encapsidated genomic RNA is termed the nucleocapsid (NC) and serves as template for transcription and replication. The NC have a helical organization.</text>
</comment>
<comment type="subunit">
    <text evidence="1">Homotrimer. Binds the viral genomic RNA.</text>
</comment>
<comment type="subcellular location">
    <subcellularLocation>
        <location evidence="1">Virion</location>
    </subcellularLocation>
    <text evidence="1">Located inside the virion, complexed with the viral RNA.</text>
</comment>
<comment type="domain">
    <text evidence="1">The N-terminus and C-terminus are involved in homooligomerization and play an essential role in viral RNA synthesis.</text>
</comment>
<comment type="similarity">
    <text evidence="2">Belongs to the tospovirus nucleocapsid protein family.</text>
</comment>
<sequence length="258" mass="28945">MSKVKLTKESIVALLTQGKDLEFEEDQNLVAFNFKTFCLENLDQIKKMSIISCLTFLKNRQSIMKVIKQSDFTFGKITIKKTSDRIGATDMTFRRLDSLIRVRLVEETGNSENLNTIKSKIASHPLIQAYGLPLDDAKSVRLAIMLGGSLPLIASVDSFEMISVVLAIYQDAKYKDLGIDPKKYDTREALGKVCTVLKSKAFEMNEDQVKKGKEYAAILSSSNPNAKGSIAMEHYSETLNKFYEMFGVKKQAKLTELA</sequence>